<proteinExistence type="inferred from homology"/>
<protein>
    <recommendedName>
        <fullName>Deubiquitinase and deneddylase Dub2</fullName>
        <shortName>ChlaDub2</shortName>
        <ecNumber>3.4.22.-</ecNumber>
    </recommendedName>
</protein>
<keyword id="KW-0378">Hydrolase</keyword>
<keyword id="KW-0472">Membrane</keyword>
<keyword id="KW-0645">Protease</keyword>
<keyword id="KW-0964">Secreted</keyword>
<keyword id="KW-0788">Thiol protease</keyword>
<keyword id="KW-0812">Transmembrane</keyword>
<keyword id="KW-1133">Transmembrane helix</keyword>
<keyword id="KW-0833">Ubl conjugation pathway</keyword>
<keyword id="KW-0843">Virulence</keyword>
<reference key="1">
    <citation type="journal article" date="2009" name="BMC Genomics">
        <title>Co-evolution of genomes and plasmids within Chlamydia trachomatis and the emergence in Sweden of a new variant strain.</title>
        <authorList>
            <person name="Seth-Smith H.M.B."/>
            <person name="Harris S.R."/>
            <person name="Persson K."/>
            <person name="Marsh P."/>
            <person name="Barron A."/>
            <person name="Bignell A."/>
            <person name="Bjartling C."/>
            <person name="Clark L."/>
            <person name="Cutcliffe L.T."/>
            <person name="Lambden P.R."/>
            <person name="Lennard N."/>
            <person name="Lockey S.J."/>
            <person name="Quail M.A."/>
            <person name="Salim O."/>
            <person name="Skilton R.J."/>
            <person name="Wang Y."/>
            <person name="Holland M.J."/>
            <person name="Parkhill J."/>
            <person name="Thomson N.R."/>
            <person name="Clarke I.N."/>
        </authorList>
    </citation>
    <scope>NUCLEOTIDE SEQUENCE [LARGE SCALE GENOMIC DNA]</scope>
    <source>
        <strain>Jali20/OT</strain>
    </source>
</reference>
<name>CDUB2_CHLTJ</name>
<sequence length="339" mass="38426">MEPIHNPPPQTCSYSRPSTTYTSFKDASCGTKVTRIIIALFLIVISCGLILCAYTFRDLLDADYSAQEGPQQATKLLQQLDKVLTGPPLPIWDNEHLFQFSCLMQNKHRRVLPIDICNPLTKFNFLEYICNCLMTKQSVNVNETDMCELFCPPTCTPENYRRLLCTSSVFPFVMWHDPSADTQEAMLTKMDQTMSSGRVGNSHWVLVIVDIEHRCVTFFDSFYNYIASPQQMREQLEGLAASLGAIYPKEGGSDSDQEELLSPFQVRIGSTVKVQSPGEFTCGAWCCQFLAWYLENPDFDLEEKVPTNPSERRALLADFISTTEQAMSRYSSLSWPTTD</sequence>
<accession>C4PQQ9</accession>
<gene>
    <name type="primary">cdu2</name>
    <name type="ordered locus">JALI_8781</name>
</gene>
<evidence type="ECO:0000250" key="1"/>
<evidence type="ECO:0000255" key="2"/>
<evidence type="ECO:0000305" key="3"/>
<dbReference type="EC" id="3.4.22.-"/>
<dbReference type="EMBL" id="FM872308">
    <property type="protein sequence ID" value="CAX11331.1"/>
    <property type="molecule type" value="Genomic_DNA"/>
</dbReference>
<dbReference type="RefSeq" id="WP_012728020.1">
    <property type="nucleotide sequence ID" value="NC_012686.1"/>
</dbReference>
<dbReference type="SMR" id="C4PQQ9"/>
<dbReference type="MEROPS" id="C48.033"/>
<dbReference type="KEGG" id="ctj:JALI_8781"/>
<dbReference type="HOGENOM" id="CLU_067510_0_0_0"/>
<dbReference type="GO" id="GO:0005576">
    <property type="term" value="C:extracellular region"/>
    <property type="evidence" value="ECO:0000250"/>
    <property type="project" value="UniProtKB"/>
</dbReference>
<dbReference type="GO" id="GO:0043657">
    <property type="term" value="C:host cell"/>
    <property type="evidence" value="ECO:0007669"/>
    <property type="project" value="UniProtKB-SubCell"/>
</dbReference>
<dbReference type="GO" id="GO:0016020">
    <property type="term" value="C:membrane"/>
    <property type="evidence" value="ECO:0007669"/>
    <property type="project" value="UniProtKB-SubCell"/>
</dbReference>
<dbReference type="GO" id="GO:0004843">
    <property type="term" value="F:cysteine-type deubiquitinase activity"/>
    <property type="evidence" value="ECO:0000250"/>
    <property type="project" value="UniProtKB"/>
</dbReference>
<dbReference type="GO" id="GO:0019784">
    <property type="term" value="F:deNEDDylase activity"/>
    <property type="evidence" value="ECO:0000250"/>
    <property type="project" value="UniProtKB"/>
</dbReference>
<dbReference type="GO" id="GO:0000338">
    <property type="term" value="P:protein deneddylation"/>
    <property type="evidence" value="ECO:0000250"/>
    <property type="project" value="UniProtKB"/>
</dbReference>
<dbReference type="GO" id="GO:0016579">
    <property type="term" value="P:protein deubiquitination"/>
    <property type="evidence" value="ECO:0000250"/>
    <property type="project" value="UniProtKB"/>
</dbReference>
<dbReference type="GO" id="GO:0006508">
    <property type="term" value="P:proteolysis"/>
    <property type="evidence" value="ECO:0007669"/>
    <property type="project" value="UniProtKB-KW"/>
</dbReference>
<dbReference type="FunFam" id="3.40.395.10:FF:000012">
    <property type="entry name" value="Deubiquitinase and deneddylase Dub2"/>
    <property type="match status" value="1"/>
</dbReference>
<dbReference type="Gene3D" id="3.40.395.10">
    <property type="entry name" value="Adenoviral Proteinase, Chain A"/>
    <property type="match status" value="1"/>
</dbReference>
<dbReference type="InterPro" id="IPR038765">
    <property type="entry name" value="Papain-like_cys_pep_sf"/>
</dbReference>
<dbReference type="InterPro" id="IPR003653">
    <property type="entry name" value="Peptidase_C48_C"/>
</dbReference>
<dbReference type="Pfam" id="PF02902">
    <property type="entry name" value="Peptidase_C48"/>
    <property type="match status" value="1"/>
</dbReference>
<dbReference type="SUPFAM" id="SSF54001">
    <property type="entry name" value="Cysteine proteinases"/>
    <property type="match status" value="1"/>
</dbReference>
<organism>
    <name type="scientific">Chlamydia trachomatis serovar B (strain Jali20/OT)</name>
    <dbReference type="NCBI Taxonomy" id="580049"/>
    <lineage>
        <taxon>Bacteria</taxon>
        <taxon>Pseudomonadati</taxon>
        <taxon>Chlamydiota</taxon>
        <taxon>Chlamydiia</taxon>
        <taxon>Chlamydiales</taxon>
        <taxon>Chlamydiaceae</taxon>
        <taxon>Chlamydia/Chlamydophila group</taxon>
        <taxon>Chlamydia</taxon>
    </lineage>
</organism>
<comment type="function">
    <text evidence="1">Effector proteins function to alter host cell physiology and promote bacterial survival in host tissues. This protease possesses deubiquitinating and deneddylating activities (By similarity).</text>
</comment>
<comment type="subcellular location">
    <subcellularLocation>
        <location evidence="1">Secreted</location>
    </subcellularLocation>
    <subcellularLocation>
        <location evidence="1">Host cell</location>
    </subcellularLocation>
    <subcellularLocation>
        <location evidence="1">Membrane</location>
        <topology evidence="1">Single-pass membrane protein</topology>
    </subcellularLocation>
    <text evidence="1">Secreted, and delivered into the host cell.</text>
</comment>
<comment type="similarity">
    <text evidence="3">Belongs to the peptidase C48 family.</text>
</comment>
<feature type="chain" id="PRO_0000396498" description="Deubiquitinase and deneddylase Dub2">
    <location>
        <begin position="1"/>
        <end position="339"/>
    </location>
</feature>
<feature type="transmembrane region" description="Helical" evidence="2">
    <location>
        <begin position="36"/>
        <end position="56"/>
    </location>
</feature>
<feature type="active site" evidence="2">
    <location>
        <position position="203"/>
    </location>
</feature>
<feature type="active site" evidence="2">
    <location>
        <position position="220"/>
    </location>
</feature>
<feature type="active site" evidence="2">
    <location>
        <position position="282"/>
    </location>
</feature>